<gene>
    <name evidence="1" type="primary">mltF</name>
    <name type="ordered locus">HSM_1482</name>
</gene>
<feature type="signal peptide" evidence="1">
    <location>
        <begin position="1"/>
        <end position="18"/>
    </location>
</feature>
<feature type="chain" id="PRO_0000353944" description="Membrane-bound lytic murein transglycosylase F">
    <location>
        <begin position="19"/>
        <end position="479"/>
    </location>
</feature>
<feature type="region of interest" description="Non-LT domain" evidence="1">
    <location>
        <begin position="19"/>
        <end position="266"/>
    </location>
</feature>
<feature type="region of interest" description="LT domain" evidence="1">
    <location>
        <begin position="267"/>
        <end position="479"/>
    </location>
</feature>
<feature type="active site" evidence="1">
    <location>
        <position position="311"/>
    </location>
</feature>
<name>MLTF_HISS2</name>
<organism>
    <name type="scientific">Histophilus somni (strain 2336)</name>
    <name type="common">Haemophilus somnus</name>
    <dbReference type="NCBI Taxonomy" id="228400"/>
    <lineage>
        <taxon>Bacteria</taxon>
        <taxon>Pseudomonadati</taxon>
        <taxon>Pseudomonadota</taxon>
        <taxon>Gammaproteobacteria</taxon>
        <taxon>Pasteurellales</taxon>
        <taxon>Pasteurellaceae</taxon>
        <taxon>Histophilus</taxon>
    </lineage>
</organism>
<protein>
    <recommendedName>
        <fullName evidence="1">Membrane-bound lytic murein transglycosylase F</fullName>
        <ecNumber evidence="1">4.2.2.n1</ecNumber>
    </recommendedName>
    <alternativeName>
        <fullName evidence="1">Murein lyase F</fullName>
    </alternativeName>
</protein>
<comment type="function">
    <text evidence="1">Murein-degrading enzyme that degrades murein glycan strands and insoluble, high-molecular weight murein sacculi, with the concomitant formation of a 1,6-anhydromuramoyl product. Lytic transglycosylases (LTs) play an integral role in the metabolism of the peptidoglycan (PG) sacculus. Their lytic action creates space within the PG sacculus to allow for its expansion as well as for the insertion of various structures such as secretion systems and flagella.</text>
</comment>
<comment type="catalytic activity">
    <reaction evidence="1">
        <text>Exolytic cleavage of the (1-&gt;4)-beta-glycosidic linkage between N-acetylmuramic acid (MurNAc) and N-acetylglucosamine (GlcNAc) residues in peptidoglycan, from either the reducing or the non-reducing ends of the peptidoglycan chains, with concomitant formation of a 1,6-anhydrobond in the MurNAc residue.</text>
        <dbReference type="EC" id="4.2.2.n1"/>
    </reaction>
</comment>
<comment type="subcellular location">
    <subcellularLocation>
        <location>Cell outer membrane</location>
        <topology>Peripheral membrane protein</topology>
    </subcellularLocation>
    <text evidence="1">Attached to the inner leaflet of the outer membrane.</text>
</comment>
<comment type="domain">
    <text evidence="1">The N-terminal domain does not have lytic activity and probably modulates enzymatic activity. The C-terminal domain is the catalytic active domain.</text>
</comment>
<comment type="similarity">
    <text evidence="1">In the N-terminal section; belongs to the bacterial solute-binding protein 3 family.</text>
</comment>
<comment type="similarity">
    <text evidence="1">In the C-terminal section; belongs to the transglycosylase Slt family.</text>
</comment>
<reference key="1">
    <citation type="submission" date="2008-02" db="EMBL/GenBank/DDBJ databases">
        <title>Complete sequence of Haemophilus somnus 2336.</title>
        <authorList>
            <consortium name="US DOE Joint Genome Institute"/>
            <person name="Siddaramappa S."/>
            <person name="Duncan A.J."/>
            <person name="Challacombe J.F."/>
            <person name="Rainey D."/>
            <person name="Gillaspy A.F."/>
            <person name="Carson M."/>
            <person name="Gipson J."/>
            <person name="Gipson M."/>
            <person name="Bruce D."/>
            <person name="Detter J.C."/>
            <person name="Han C.S."/>
            <person name="Land M."/>
            <person name="Tapia R."/>
            <person name="Thompson L.S."/>
            <person name="Orvis J."/>
            <person name="Zaitshik J."/>
            <person name="Barnes G."/>
            <person name="Brettin T.S."/>
            <person name="Dyer D.W."/>
            <person name="Inzana T.J."/>
        </authorList>
    </citation>
    <scope>NUCLEOTIDE SEQUENCE [LARGE SCALE GENOMIC DNA]</scope>
    <source>
        <strain>2336</strain>
    </source>
</reference>
<proteinExistence type="inferred from homology"/>
<accession>B0UUK3</accession>
<keyword id="KW-0998">Cell outer membrane</keyword>
<keyword id="KW-0961">Cell wall biogenesis/degradation</keyword>
<keyword id="KW-0456">Lyase</keyword>
<keyword id="KW-0472">Membrane</keyword>
<keyword id="KW-0732">Signal</keyword>
<dbReference type="EC" id="4.2.2.n1" evidence="1"/>
<dbReference type="EMBL" id="CP000947">
    <property type="protein sequence ID" value="ACA31232.1"/>
    <property type="molecule type" value="Genomic_DNA"/>
</dbReference>
<dbReference type="RefSeq" id="WP_012340621.1">
    <property type="nucleotide sequence ID" value="NC_010519.1"/>
</dbReference>
<dbReference type="SMR" id="B0UUK3"/>
<dbReference type="STRING" id="228400.HSM_1482"/>
<dbReference type="CAZy" id="GH23">
    <property type="family name" value="Glycoside Hydrolase Family 23"/>
</dbReference>
<dbReference type="GeneID" id="31487780"/>
<dbReference type="KEGG" id="hsm:HSM_1482"/>
<dbReference type="HOGENOM" id="CLU_027494_0_1_6"/>
<dbReference type="GO" id="GO:0009279">
    <property type="term" value="C:cell outer membrane"/>
    <property type="evidence" value="ECO:0007669"/>
    <property type="project" value="UniProtKB-SubCell"/>
</dbReference>
<dbReference type="GO" id="GO:0008933">
    <property type="term" value="F:peptidoglycan lytic transglycosylase activity"/>
    <property type="evidence" value="ECO:0007669"/>
    <property type="project" value="UniProtKB-UniRule"/>
</dbReference>
<dbReference type="GO" id="GO:0016998">
    <property type="term" value="P:cell wall macromolecule catabolic process"/>
    <property type="evidence" value="ECO:0007669"/>
    <property type="project" value="UniProtKB-UniRule"/>
</dbReference>
<dbReference type="GO" id="GO:0071555">
    <property type="term" value="P:cell wall organization"/>
    <property type="evidence" value="ECO:0007669"/>
    <property type="project" value="UniProtKB-KW"/>
</dbReference>
<dbReference type="GO" id="GO:0009253">
    <property type="term" value="P:peptidoglycan catabolic process"/>
    <property type="evidence" value="ECO:0007669"/>
    <property type="project" value="TreeGrafter"/>
</dbReference>
<dbReference type="CDD" id="cd13403">
    <property type="entry name" value="MLTF-like"/>
    <property type="match status" value="1"/>
</dbReference>
<dbReference type="CDD" id="cd01009">
    <property type="entry name" value="PBP2_YfhD_N"/>
    <property type="match status" value="1"/>
</dbReference>
<dbReference type="FunFam" id="1.10.530.10:FF:000003">
    <property type="entry name" value="Membrane-bound lytic murein transglycosylase F"/>
    <property type="match status" value="1"/>
</dbReference>
<dbReference type="Gene3D" id="1.10.530.10">
    <property type="match status" value="1"/>
</dbReference>
<dbReference type="Gene3D" id="3.40.190.10">
    <property type="entry name" value="Periplasmic binding protein-like II"/>
    <property type="match status" value="2"/>
</dbReference>
<dbReference type="HAMAP" id="MF_02016">
    <property type="entry name" value="MltF"/>
    <property type="match status" value="1"/>
</dbReference>
<dbReference type="InterPro" id="IPR023346">
    <property type="entry name" value="Lysozyme-like_dom_sf"/>
</dbReference>
<dbReference type="InterPro" id="IPR023703">
    <property type="entry name" value="MltF"/>
</dbReference>
<dbReference type="InterPro" id="IPR001638">
    <property type="entry name" value="Solute-binding_3/MltF_N"/>
</dbReference>
<dbReference type="InterPro" id="IPR000189">
    <property type="entry name" value="Transglyc_AS"/>
</dbReference>
<dbReference type="InterPro" id="IPR008258">
    <property type="entry name" value="Transglycosylase_SLT_dom_1"/>
</dbReference>
<dbReference type="NCBIfam" id="NF008112">
    <property type="entry name" value="PRK10859.1"/>
    <property type="match status" value="1"/>
</dbReference>
<dbReference type="PANTHER" id="PTHR35936">
    <property type="entry name" value="MEMBRANE-BOUND LYTIC MUREIN TRANSGLYCOSYLASE F"/>
    <property type="match status" value="1"/>
</dbReference>
<dbReference type="PANTHER" id="PTHR35936:SF32">
    <property type="entry name" value="MEMBRANE-BOUND LYTIC MUREIN TRANSGLYCOSYLASE F"/>
    <property type="match status" value="1"/>
</dbReference>
<dbReference type="Pfam" id="PF00497">
    <property type="entry name" value="SBP_bac_3"/>
    <property type="match status" value="1"/>
</dbReference>
<dbReference type="Pfam" id="PF01464">
    <property type="entry name" value="SLT"/>
    <property type="match status" value="1"/>
</dbReference>
<dbReference type="SMART" id="SM00062">
    <property type="entry name" value="PBPb"/>
    <property type="match status" value="1"/>
</dbReference>
<dbReference type="SUPFAM" id="SSF53955">
    <property type="entry name" value="Lysozyme-like"/>
    <property type="match status" value="1"/>
</dbReference>
<dbReference type="SUPFAM" id="SSF53850">
    <property type="entry name" value="Periplasmic binding protein-like II"/>
    <property type="match status" value="1"/>
</dbReference>
<dbReference type="PROSITE" id="PS00922">
    <property type="entry name" value="TRANSGLYCOSYLASE"/>
    <property type="match status" value="1"/>
</dbReference>
<sequence>MKGLFIRIVLAICLSLWAIDMVFPWQQIVRSKQNYHTTIQERQKLIVGTINNPVSYFIGTNGETGLEYELSKAFANYLNVDLEMFPLNSADALFQALAQGKIDIAAASLFYQQDRSEKFKLGPAYHAASWQLTYRKGERRPITLENLSGKLVIPANSALNNILLAKKEKYPSLTWETSELSQEELLFQVAEGKIDYTIATSTEVSVNQQIKPQIAIAFNVTDEFTVHWYLSDKGASELQAALLDFMNSAIENGLIARIEEKYFNHLNQFDYVDTRSYLNAIETVLPKYAPLFEKYKGDLDWHLLAAISYQESHWNPEATSPTGVRGMMMLTKATADRMNITNRLDPEQSIKAGSEYLHLLLKQMPDTILKEDRIWFALAAYNMGLGHLLDVRRLTKQLGGNPDNWLEVKKNLPLLAQKRYFTHLKYGYARGYEAFQYVENIRRYMNSIMNYYRLQQNQQDRYENENNDVISTQTQQEQR</sequence>
<evidence type="ECO:0000255" key="1">
    <source>
        <dbReference type="HAMAP-Rule" id="MF_02016"/>
    </source>
</evidence>